<keyword id="KW-0249">Electron transport</keyword>
<keyword id="KW-0472">Membrane</keyword>
<keyword id="KW-0496">Mitochondrion</keyword>
<keyword id="KW-0999">Mitochondrion inner membrane</keyword>
<keyword id="KW-0520">NAD</keyword>
<keyword id="KW-1185">Reference proteome</keyword>
<keyword id="KW-0679">Respiratory chain</keyword>
<keyword id="KW-1278">Translocase</keyword>
<keyword id="KW-0812">Transmembrane</keyword>
<keyword id="KW-1133">Transmembrane helix</keyword>
<keyword id="KW-0813">Transport</keyword>
<keyword id="KW-0830">Ubiquinone</keyword>
<comment type="function">
    <text evidence="1">Core subunit of the mitochondrial membrane respiratory chain NADH dehydrogenase (Complex I) which catalyzes electron transfer from NADH through the respiratory chain, using ubiquinone as an electron acceptor. Essential for the catalytic activity and assembly of complex I.</text>
</comment>
<comment type="catalytic activity">
    <reaction evidence="1">
        <text>a ubiquinone + NADH + 5 H(+)(in) = a ubiquinol + NAD(+) + 4 H(+)(out)</text>
        <dbReference type="Rhea" id="RHEA:29091"/>
        <dbReference type="Rhea" id="RHEA-COMP:9565"/>
        <dbReference type="Rhea" id="RHEA-COMP:9566"/>
        <dbReference type="ChEBI" id="CHEBI:15378"/>
        <dbReference type="ChEBI" id="CHEBI:16389"/>
        <dbReference type="ChEBI" id="CHEBI:17976"/>
        <dbReference type="ChEBI" id="CHEBI:57540"/>
        <dbReference type="ChEBI" id="CHEBI:57945"/>
        <dbReference type="EC" id="7.1.1.2"/>
    </reaction>
</comment>
<comment type="subunit">
    <text evidence="2">Core subunit of respiratory chain NADH dehydrogenase (Complex I) which is composed of 45 different subunits.</text>
</comment>
<comment type="subcellular location">
    <subcellularLocation>
        <location evidence="2">Mitochondrion inner membrane</location>
        <topology evidence="3">Multi-pass membrane protein</topology>
    </subcellularLocation>
</comment>
<comment type="similarity">
    <text evidence="4">Belongs to the complex I subunit 6 family.</text>
</comment>
<reference key="1">
    <citation type="journal article" date="1993" name="J. Mol. Evol.">
        <title>Comparison between the complete mtDNA sequences of the blue and the fin whale, two species that can hybridize in nature.</title>
        <authorList>
            <person name="Arnason U."/>
            <person name="Gullberg A."/>
        </authorList>
    </citation>
    <scope>NUCLEOTIDE SEQUENCE [GENOMIC DNA]</scope>
</reference>
<feature type="chain" id="PRO_0000118246" description="NADH-ubiquinone oxidoreductase chain 6">
    <location>
        <begin position="1"/>
        <end position="175"/>
    </location>
</feature>
<feature type="transmembrane region" description="Helical" evidence="3">
    <location>
        <begin position="1"/>
        <end position="21"/>
    </location>
</feature>
<feature type="transmembrane region" description="Helical" evidence="3">
    <location>
        <begin position="25"/>
        <end position="45"/>
    </location>
</feature>
<feature type="transmembrane region" description="Helical" evidence="3">
    <location>
        <begin position="47"/>
        <end position="67"/>
    </location>
</feature>
<feature type="transmembrane region" description="Helical" evidence="3">
    <location>
        <begin position="88"/>
        <end position="108"/>
    </location>
</feature>
<feature type="transmembrane region" description="Helical" evidence="3">
    <location>
        <begin position="149"/>
        <end position="169"/>
    </location>
</feature>
<geneLocation type="mitochondrion"/>
<evidence type="ECO:0000250" key="1">
    <source>
        <dbReference type="UniProtKB" id="P03923"/>
    </source>
</evidence>
<evidence type="ECO:0000250" key="2">
    <source>
        <dbReference type="UniProtKB" id="P03924"/>
    </source>
</evidence>
<evidence type="ECO:0000255" key="3"/>
<evidence type="ECO:0000305" key="4"/>
<name>NU6M_BALMU</name>
<protein>
    <recommendedName>
        <fullName>NADH-ubiquinone oxidoreductase chain 6</fullName>
        <ecNumber evidence="1">7.1.1.2</ecNumber>
    </recommendedName>
    <alternativeName>
        <fullName>NADH dehydrogenase subunit 6</fullName>
    </alternativeName>
</protein>
<accession>P41300</accession>
<sequence length="175" mass="18511">MVTYIVFVLSIIFVISFVGVSSKPSPIYGGLGLIVGGGAGCGVVLSFGGSFLGLMVFLIYLGGMLVVFGYTTAMATEQYPEVWVSNKVVLGAFILGLVVESLIVIYALKSGEVKIVFEFDGLGDWVIYDTGGSGVFSEEATGIAALYSYGVWLVIVTGWSLFVSVVIIMEITRGN</sequence>
<gene>
    <name type="primary">MT-ND6</name>
    <name type="synonym">MTND6</name>
    <name type="synonym">NADH6</name>
    <name type="synonym">ND6</name>
</gene>
<dbReference type="EC" id="7.1.1.2" evidence="1"/>
<dbReference type="EMBL" id="X72204">
    <property type="protein sequence ID" value="CAA51006.1"/>
    <property type="molecule type" value="Genomic_DNA"/>
</dbReference>
<dbReference type="PIR" id="S41831">
    <property type="entry name" value="S41831"/>
</dbReference>
<dbReference type="RefSeq" id="NP_007067.1">
    <property type="nucleotide sequence ID" value="NC_001601.1"/>
</dbReference>
<dbReference type="SMR" id="P41300"/>
<dbReference type="GeneID" id="807742"/>
<dbReference type="KEGG" id="bmus:807742"/>
<dbReference type="CTD" id="4541"/>
<dbReference type="OrthoDB" id="9685541at2759"/>
<dbReference type="Proteomes" id="UP000694857">
    <property type="component" value="Mitochondrion MT"/>
</dbReference>
<dbReference type="GO" id="GO:0005743">
    <property type="term" value="C:mitochondrial inner membrane"/>
    <property type="evidence" value="ECO:0000250"/>
    <property type="project" value="UniProtKB"/>
</dbReference>
<dbReference type="GO" id="GO:0008137">
    <property type="term" value="F:NADH dehydrogenase (ubiquinone) activity"/>
    <property type="evidence" value="ECO:0000250"/>
    <property type="project" value="UniProtKB"/>
</dbReference>
<dbReference type="GO" id="GO:0006120">
    <property type="term" value="P:mitochondrial electron transport, NADH to ubiquinone"/>
    <property type="evidence" value="ECO:0000250"/>
    <property type="project" value="UniProtKB"/>
</dbReference>
<dbReference type="GO" id="GO:0032981">
    <property type="term" value="P:mitochondrial respiratory chain complex I assembly"/>
    <property type="evidence" value="ECO:0000250"/>
    <property type="project" value="UniProtKB"/>
</dbReference>
<dbReference type="Gene3D" id="1.20.120.1200">
    <property type="entry name" value="NADH-ubiquinone/plastoquinone oxidoreductase chain 6, subunit NuoJ"/>
    <property type="match status" value="1"/>
</dbReference>
<dbReference type="InterPro" id="IPR050269">
    <property type="entry name" value="ComplexI_Subunit6"/>
</dbReference>
<dbReference type="InterPro" id="IPR001457">
    <property type="entry name" value="NADH_UbQ/plastoQ_OxRdtase_su6"/>
</dbReference>
<dbReference type="InterPro" id="IPR042106">
    <property type="entry name" value="Nuo/plastoQ_OxRdtase_6_NuoJ"/>
</dbReference>
<dbReference type="PANTHER" id="PTHR11435">
    <property type="entry name" value="NADH UBIQUINONE OXIDOREDUCTASE SUBUNIT ND6"/>
    <property type="match status" value="1"/>
</dbReference>
<dbReference type="PANTHER" id="PTHR11435:SF1">
    <property type="entry name" value="NADH-UBIQUINONE OXIDOREDUCTASE CHAIN 6"/>
    <property type="match status" value="1"/>
</dbReference>
<dbReference type="Pfam" id="PF00499">
    <property type="entry name" value="Oxidored_q3"/>
    <property type="match status" value="1"/>
</dbReference>
<organism>
    <name type="scientific">Balaenoptera musculus</name>
    <name type="common">Blue whale</name>
    <dbReference type="NCBI Taxonomy" id="9771"/>
    <lineage>
        <taxon>Eukaryota</taxon>
        <taxon>Metazoa</taxon>
        <taxon>Chordata</taxon>
        <taxon>Craniata</taxon>
        <taxon>Vertebrata</taxon>
        <taxon>Euteleostomi</taxon>
        <taxon>Mammalia</taxon>
        <taxon>Eutheria</taxon>
        <taxon>Laurasiatheria</taxon>
        <taxon>Artiodactyla</taxon>
        <taxon>Whippomorpha</taxon>
        <taxon>Cetacea</taxon>
        <taxon>Mysticeti</taxon>
        <taxon>Balaenopteridae</taxon>
        <taxon>Balaenoptera</taxon>
    </lineage>
</organism>
<proteinExistence type="inferred from homology"/>